<gene>
    <name evidence="1" type="primary">znuC</name>
    <name type="ordered locus">Meso_4005</name>
</gene>
<protein>
    <recommendedName>
        <fullName evidence="1">Zinc import ATP-binding protein ZnuC</fullName>
        <ecNumber evidence="1">7.2.2.20</ecNumber>
    </recommendedName>
</protein>
<name>ZNUC_CHESB</name>
<dbReference type="EC" id="7.2.2.20" evidence="1"/>
<dbReference type="EMBL" id="CP000390">
    <property type="protein sequence ID" value="ABG65372.1"/>
    <property type="molecule type" value="Genomic_DNA"/>
</dbReference>
<dbReference type="SMR" id="Q11B53"/>
<dbReference type="STRING" id="266779.Meso_4005"/>
<dbReference type="KEGG" id="mes:Meso_4005"/>
<dbReference type="eggNOG" id="COG1121">
    <property type="taxonomic scope" value="Bacteria"/>
</dbReference>
<dbReference type="HOGENOM" id="CLU_000604_1_11_5"/>
<dbReference type="OrthoDB" id="9780942at2"/>
<dbReference type="GO" id="GO:0005886">
    <property type="term" value="C:plasma membrane"/>
    <property type="evidence" value="ECO:0007669"/>
    <property type="project" value="UniProtKB-SubCell"/>
</dbReference>
<dbReference type="GO" id="GO:0015633">
    <property type="term" value="F:ABC-type zinc transporter activity"/>
    <property type="evidence" value="ECO:0007669"/>
    <property type="project" value="UniProtKB-EC"/>
</dbReference>
<dbReference type="GO" id="GO:0005524">
    <property type="term" value="F:ATP binding"/>
    <property type="evidence" value="ECO:0007669"/>
    <property type="project" value="UniProtKB-KW"/>
</dbReference>
<dbReference type="GO" id="GO:0016887">
    <property type="term" value="F:ATP hydrolysis activity"/>
    <property type="evidence" value="ECO:0007669"/>
    <property type="project" value="InterPro"/>
</dbReference>
<dbReference type="GO" id="GO:0010043">
    <property type="term" value="P:response to zinc ion"/>
    <property type="evidence" value="ECO:0007669"/>
    <property type="project" value="TreeGrafter"/>
</dbReference>
<dbReference type="Gene3D" id="3.40.50.300">
    <property type="entry name" value="P-loop containing nucleotide triphosphate hydrolases"/>
    <property type="match status" value="1"/>
</dbReference>
<dbReference type="InterPro" id="IPR003593">
    <property type="entry name" value="AAA+_ATPase"/>
</dbReference>
<dbReference type="InterPro" id="IPR003439">
    <property type="entry name" value="ABC_transporter-like_ATP-bd"/>
</dbReference>
<dbReference type="InterPro" id="IPR017871">
    <property type="entry name" value="ABC_transporter-like_CS"/>
</dbReference>
<dbReference type="InterPro" id="IPR050153">
    <property type="entry name" value="Metal_Ion_Import_ABC"/>
</dbReference>
<dbReference type="InterPro" id="IPR027417">
    <property type="entry name" value="P-loop_NTPase"/>
</dbReference>
<dbReference type="PANTHER" id="PTHR42734">
    <property type="entry name" value="METAL TRANSPORT SYSTEM ATP-BINDING PROTEIN TM_0124-RELATED"/>
    <property type="match status" value="1"/>
</dbReference>
<dbReference type="PANTHER" id="PTHR42734:SF9">
    <property type="entry name" value="ZINC IMPORT ATP-BINDING PROTEIN ZNUC"/>
    <property type="match status" value="1"/>
</dbReference>
<dbReference type="Pfam" id="PF00005">
    <property type="entry name" value="ABC_tran"/>
    <property type="match status" value="1"/>
</dbReference>
<dbReference type="SMART" id="SM00382">
    <property type="entry name" value="AAA"/>
    <property type="match status" value="1"/>
</dbReference>
<dbReference type="SUPFAM" id="SSF52540">
    <property type="entry name" value="P-loop containing nucleoside triphosphate hydrolases"/>
    <property type="match status" value="1"/>
</dbReference>
<dbReference type="PROSITE" id="PS00211">
    <property type="entry name" value="ABC_TRANSPORTER_1"/>
    <property type="match status" value="1"/>
</dbReference>
<dbReference type="PROSITE" id="PS50893">
    <property type="entry name" value="ABC_TRANSPORTER_2"/>
    <property type="match status" value="1"/>
</dbReference>
<dbReference type="PROSITE" id="PS51298">
    <property type="entry name" value="ZNUC"/>
    <property type="match status" value="1"/>
</dbReference>
<comment type="function">
    <text evidence="1">Part of the ABC transporter complex ZnuABC involved in zinc import. Responsible for energy coupling to the transport system.</text>
</comment>
<comment type="catalytic activity">
    <reaction evidence="1">
        <text>Zn(2+)(out) + ATP(in) + H2O(in) = Zn(2+)(in) + ADP(in) + phosphate(in) + H(+)(in)</text>
        <dbReference type="Rhea" id="RHEA:29795"/>
        <dbReference type="ChEBI" id="CHEBI:15377"/>
        <dbReference type="ChEBI" id="CHEBI:15378"/>
        <dbReference type="ChEBI" id="CHEBI:29105"/>
        <dbReference type="ChEBI" id="CHEBI:30616"/>
        <dbReference type="ChEBI" id="CHEBI:43474"/>
        <dbReference type="ChEBI" id="CHEBI:456216"/>
        <dbReference type="EC" id="7.2.2.20"/>
    </reaction>
</comment>
<comment type="subunit">
    <text evidence="1">The complex is composed of two ATP-binding proteins (ZnuC), two transmembrane proteins (ZnuB) and a solute-binding protein (ZnuA).</text>
</comment>
<comment type="subcellular location">
    <subcellularLocation>
        <location evidence="1">Cell inner membrane</location>
        <topology evidence="1">Peripheral membrane protein</topology>
    </subcellularLocation>
</comment>
<comment type="similarity">
    <text evidence="1">Belongs to the ABC transporter superfamily. Zinc importer (TC 3.A.1.15.5) family.</text>
</comment>
<proteinExistence type="inferred from homology"/>
<accession>Q11B53</accession>
<keyword id="KW-0067">ATP-binding</keyword>
<keyword id="KW-0997">Cell inner membrane</keyword>
<keyword id="KW-1003">Cell membrane</keyword>
<keyword id="KW-0406">Ion transport</keyword>
<keyword id="KW-0472">Membrane</keyword>
<keyword id="KW-0547">Nucleotide-binding</keyword>
<keyword id="KW-1278">Translocase</keyword>
<keyword id="KW-0813">Transport</keyword>
<keyword id="KW-0862">Zinc</keyword>
<keyword id="KW-0864">Zinc transport</keyword>
<feature type="chain" id="PRO_0000281519" description="Zinc import ATP-binding protein ZnuC">
    <location>
        <begin position="1"/>
        <end position="283"/>
    </location>
</feature>
<feature type="domain" description="ABC transporter" evidence="1">
    <location>
        <begin position="13"/>
        <end position="228"/>
    </location>
</feature>
<feature type="region of interest" description="Disordered" evidence="2">
    <location>
        <begin position="264"/>
        <end position="283"/>
    </location>
</feature>
<feature type="compositionally biased region" description="Gly residues" evidence="2">
    <location>
        <begin position="272"/>
        <end position="283"/>
    </location>
</feature>
<feature type="binding site" evidence="1">
    <location>
        <begin position="45"/>
        <end position="52"/>
    </location>
    <ligand>
        <name>ATP</name>
        <dbReference type="ChEBI" id="CHEBI:30616"/>
    </ligand>
</feature>
<sequence>MLQTARQDQEVLVEMRNAGVHRSGRWLVRGVDLTVRRGEIVTLIGPNGSGKSTTVKMAIGVLQPDEGAVRRMPSLKVGYVPQKVSIDWTLPLSVERLMALTGTLDRKKVGEALEAAGIAHLARAEVQTLSGGEFQRALLARALAREPDLLVLDEPVQGVDFTGEIALYQLISEIRDRTGCGVLLISHDLHVVMAATDTVICLNGHICCRGTPEKVLKSPEYVRLFGARAGDTLAIYHHHHDHTHLADGRVRQADGTIVDDCHAHHHDHARDGGQGGGGHGHAG</sequence>
<reference key="1">
    <citation type="submission" date="2006-06" db="EMBL/GenBank/DDBJ databases">
        <title>Complete sequence of chromosome of Mesorhizobium sp. BNC1.</title>
        <authorList>
            <consortium name="US DOE Joint Genome Institute"/>
            <person name="Copeland A."/>
            <person name="Lucas S."/>
            <person name="Lapidus A."/>
            <person name="Barry K."/>
            <person name="Detter J.C."/>
            <person name="Glavina del Rio T."/>
            <person name="Hammon N."/>
            <person name="Israni S."/>
            <person name="Dalin E."/>
            <person name="Tice H."/>
            <person name="Pitluck S."/>
            <person name="Chertkov O."/>
            <person name="Brettin T."/>
            <person name="Bruce D."/>
            <person name="Han C."/>
            <person name="Tapia R."/>
            <person name="Gilna P."/>
            <person name="Schmutz J."/>
            <person name="Larimer F."/>
            <person name="Land M."/>
            <person name="Hauser L."/>
            <person name="Kyrpides N."/>
            <person name="Mikhailova N."/>
            <person name="Richardson P."/>
        </authorList>
    </citation>
    <scope>NUCLEOTIDE SEQUENCE [LARGE SCALE GENOMIC DNA]</scope>
    <source>
        <strain>BNC1</strain>
    </source>
</reference>
<evidence type="ECO:0000255" key="1">
    <source>
        <dbReference type="HAMAP-Rule" id="MF_01725"/>
    </source>
</evidence>
<evidence type="ECO:0000256" key="2">
    <source>
        <dbReference type="SAM" id="MobiDB-lite"/>
    </source>
</evidence>
<organism>
    <name type="scientific">Chelativorans sp. (strain BNC1)</name>
    <dbReference type="NCBI Taxonomy" id="266779"/>
    <lineage>
        <taxon>Bacteria</taxon>
        <taxon>Pseudomonadati</taxon>
        <taxon>Pseudomonadota</taxon>
        <taxon>Alphaproteobacteria</taxon>
        <taxon>Hyphomicrobiales</taxon>
        <taxon>Phyllobacteriaceae</taxon>
        <taxon>Chelativorans</taxon>
    </lineage>
</organism>